<proteinExistence type="inferred from homology"/>
<gene>
    <name evidence="1" type="primary">rplV</name>
    <name type="ordered locus">Pnec_0055</name>
</gene>
<feature type="chain" id="PRO_0000354503" description="Large ribosomal subunit protein uL22">
    <location>
        <begin position="1"/>
        <end position="111"/>
    </location>
</feature>
<keyword id="KW-0687">Ribonucleoprotein</keyword>
<keyword id="KW-0689">Ribosomal protein</keyword>
<keyword id="KW-0694">RNA-binding</keyword>
<keyword id="KW-0699">rRNA-binding</keyword>
<accession>B1XSQ6</accession>
<sequence length="111" mass="12077">MMMEVKAIHKGARISAQKTRLVADQIRGLPIARALNILNFSPKKAAFIVKKVVESAVANAEHNKGADIDELKVSAIIVDKGTSLKRFTARAKGRGNQIEKQTCHISVTLSN</sequence>
<organism>
    <name type="scientific">Polynucleobacter necessarius subsp. necessarius (strain STIR1)</name>
    <dbReference type="NCBI Taxonomy" id="452638"/>
    <lineage>
        <taxon>Bacteria</taxon>
        <taxon>Pseudomonadati</taxon>
        <taxon>Pseudomonadota</taxon>
        <taxon>Betaproteobacteria</taxon>
        <taxon>Burkholderiales</taxon>
        <taxon>Burkholderiaceae</taxon>
        <taxon>Polynucleobacter</taxon>
    </lineage>
</organism>
<evidence type="ECO:0000255" key="1">
    <source>
        <dbReference type="HAMAP-Rule" id="MF_01331"/>
    </source>
</evidence>
<evidence type="ECO:0000305" key="2"/>
<reference key="1">
    <citation type="journal article" date="2013" name="Proc. Natl. Acad. Sci. U.S.A.">
        <title>Polynucleobacter necessarius, a model for genome reduction in both free-living and symbiotic bacteria.</title>
        <authorList>
            <person name="Boscaro V."/>
            <person name="Felletti M."/>
            <person name="Vannini C."/>
            <person name="Ackerman M.S."/>
            <person name="Chain P.S."/>
            <person name="Malfatti S."/>
            <person name="Vergez L.M."/>
            <person name="Shin M."/>
            <person name="Doak T.G."/>
            <person name="Lynch M."/>
            <person name="Petroni G."/>
        </authorList>
    </citation>
    <scope>NUCLEOTIDE SEQUENCE [LARGE SCALE GENOMIC DNA]</scope>
    <source>
        <strain>STIR1</strain>
    </source>
</reference>
<name>RL22_POLNS</name>
<comment type="function">
    <text evidence="1">This protein binds specifically to 23S rRNA; its binding is stimulated by other ribosomal proteins, e.g. L4, L17, and L20. It is important during the early stages of 50S assembly. It makes multiple contacts with different domains of the 23S rRNA in the assembled 50S subunit and ribosome (By similarity).</text>
</comment>
<comment type="function">
    <text evidence="1">The globular domain of the protein is located near the polypeptide exit tunnel on the outside of the subunit, while an extended beta-hairpin is found that lines the wall of the exit tunnel in the center of the 70S ribosome.</text>
</comment>
<comment type="subunit">
    <text evidence="1">Part of the 50S ribosomal subunit.</text>
</comment>
<comment type="similarity">
    <text evidence="1">Belongs to the universal ribosomal protein uL22 family.</text>
</comment>
<protein>
    <recommendedName>
        <fullName evidence="1">Large ribosomal subunit protein uL22</fullName>
    </recommendedName>
    <alternativeName>
        <fullName evidence="2">50S ribosomal protein L22</fullName>
    </alternativeName>
</protein>
<dbReference type="EMBL" id="CP001010">
    <property type="protein sequence ID" value="ACB43383.1"/>
    <property type="molecule type" value="Genomic_DNA"/>
</dbReference>
<dbReference type="SMR" id="B1XSQ6"/>
<dbReference type="STRING" id="452638.Pnec_0055"/>
<dbReference type="KEGG" id="pne:Pnec_0055"/>
<dbReference type="eggNOG" id="COG0091">
    <property type="taxonomic scope" value="Bacteria"/>
</dbReference>
<dbReference type="HOGENOM" id="CLU_083987_3_3_4"/>
<dbReference type="GO" id="GO:0022625">
    <property type="term" value="C:cytosolic large ribosomal subunit"/>
    <property type="evidence" value="ECO:0007669"/>
    <property type="project" value="TreeGrafter"/>
</dbReference>
<dbReference type="GO" id="GO:0019843">
    <property type="term" value="F:rRNA binding"/>
    <property type="evidence" value="ECO:0007669"/>
    <property type="project" value="UniProtKB-UniRule"/>
</dbReference>
<dbReference type="GO" id="GO:0003735">
    <property type="term" value="F:structural constituent of ribosome"/>
    <property type="evidence" value="ECO:0007669"/>
    <property type="project" value="InterPro"/>
</dbReference>
<dbReference type="GO" id="GO:0006412">
    <property type="term" value="P:translation"/>
    <property type="evidence" value="ECO:0007669"/>
    <property type="project" value="UniProtKB-UniRule"/>
</dbReference>
<dbReference type="CDD" id="cd00336">
    <property type="entry name" value="Ribosomal_L22"/>
    <property type="match status" value="1"/>
</dbReference>
<dbReference type="FunFam" id="3.90.470.10:FF:000001">
    <property type="entry name" value="50S ribosomal protein L22"/>
    <property type="match status" value="1"/>
</dbReference>
<dbReference type="Gene3D" id="3.90.470.10">
    <property type="entry name" value="Ribosomal protein L22/L17"/>
    <property type="match status" value="1"/>
</dbReference>
<dbReference type="HAMAP" id="MF_01331_B">
    <property type="entry name" value="Ribosomal_uL22_B"/>
    <property type="match status" value="1"/>
</dbReference>
<dbReference type="InterPro" id="IPR001063">
    <property type="entry name" value="Ribosomal_uL22"/>
</dbReference>
<dbReference type="InterPro" id="IPR005727">
    <property type="entry name" value="Ribosomal_uL22_bac/chlpt-type"/>
</dbReference>
<dbReference type="InterPro" id="IPR047867">
    <property type="entry name" value="Ribosomal_uL22_bac/org-type"/>
</dbReference>
<dbReference type="InterPro" id="IPR018260">
    <property type="entry name" value="Ribosomal_uL22_CS"/>
</dbReference>
<dbReference type="InterPro" id="IPR036394">
    <property type="entry name" value="Ribosomal_uL22_sf"/>
</dbReference>
<dbReference type="NCBIfam" id="TIGR01044">
    <property type="entry name" value="rplV_bact"/>
    <property type="match status" value="1"/>
</dbReference>
<dbReference type="PANTHER" id="PTHR13501">
    <property type="entry name" value="CHLOROPLAST 50S RIBOSOMAL PROTEIN L22-RELATED"/>
    <property type="match status" value="1"/>
</dbReference>
<dbReference type="PANTHER" id="PTHR13501:SF8">
    <property type="entry name" value="LARGE RIBOSOMAL SUBUNIT PROTEIN UL22M"/>
    <property type="match status" value="1"/>
</dbReference>
<dbReference type="Pfam" id="PF00237">
    <property type="entry name" value="Ribosomal_L22"/>
    <property type="match status" value="1"/>
</dbReference>
<dbReference type="SUPFAM" id="SSF54843">
    <property type="entry name" value="Ribosomal protein L22"/>
    <property type="match status" value="1"/>
</dbReference>
<dbReference type="PROSITE" id="PS00464">
    <property type="entry name" value="RIBOSOMAL_L22"/>
    <property type="match status" value="1"/>
</dbReference>